<protein>
    <recommendedName>
        <fullName evidence="1">Large ribosomal subunit protein bL36</fullName>
    </recommendedName>
    <alternativeName>
        <fullName evidence="2">50S ribosomal protein L36</fullName>
    </alternativeName>
</protein>
<accession>B3EP38</accession>
<sequence>MKVYSSIKKRCEHCRIIRRKGKRFVICRVNPSHKQRQG</sequence>
<comment type="similarity">
    <text evidence="1">Belongs to the bacterial ribosomal protein bL36 family.</text>
</comment>
<keyword id="KW-0687">Ribonucleoprotein</keyword>
<keyword id="KW-0689">Ribosomal protein</keyword>
<feature type="chain" id="PRO_1000101016" description="Large ribosomal subunit protein bL36">
    <location>
        <begin position="1"/>
        <end position="38"/>
    </location>
</feature>
<reference key="1">
    <citation type="submission" date="2008-06" db="EMBL/GenBank/DDBJ databases">
        <title>Complete sequence of Chlorobium phaeobacteroides BS1.</title>
        <authorList>
            <consortium name="US DOE Joint Genome Institute"/>
            <person name="Lucas S."/>
            <person name="Copeland A."/>
            <person name="Lapidus A."/>
            <person name="Glavina del Rio T."/>
            <person name="Dalin E."/>
            <person name="Tice H."/>
            <person name="Bruce D."/>
            <person name="Goodwin L."/>
            <person name="Pitluck S."/>
            <person name="Schmutz J."/>
            <person name="Larimer F."/>
            <person name="Land M."/>
            <person name="Hauser L."/>
            <person name="Kyrpides N."/>
            <person name="Ovchinnikova G."/>
            <person name="Li T."/>
            <person name="Liu Z."/>
            <person name="Zhao F."/>
            <person name="Overmann J."/>
            <person name="Bryant D.A."/>
            <person name="Richardson P."/>
        </authorList>
    </citation>
    <scope>NUCLEOTIDE SEQUENCE [LARGE SCALE GENOMIC DNA]</scope>
    <source>
        <strain>BS1</strain>
    </source>
</reference>
<evidence type="ECO:0000255" key="1">
    <source>
        <dbReference type="HAMAP-Rule" id="MF_00251"/>
    </source>
</evidence>
<evidence type="ECO:0000305" key="2"/>
<gene>
    <name evidence="1" type="primary">rpmJ</name>
    <name type="ordered locus">Cphamn1_2273</name>
</gene>
<name>RL36_CHLPB</name>
<organism>
    <name type="scientific">Chlorobium phaeobacteroides (strain BS1)</name>
    <dbReference type="NCBI Taxonomy" id="331678"/>
    <lineage>
        <taxon>Bacteria</taxon>
        <taxon>Pseudomonadati</taxon>
        <taxon>Chlorobiota</taxon>
        <taxon>Chlorobiia</taxon>
        <taxon>Chlorobiales</taxon>
        <taxon>Chlorobiaceae</taxon>
        <taxon>Chlorobium/Pelodictyon group</taxon>
        <taxon>Chlorobium</taxon>
    </lineage>
</organism>
<proteinExistence type="inferred from homology"/>
<dbReference type="EMBL" id="CP001101">
    <property type="protein sequence ID" value="ACE05177.1"/>
    <property type="molecule type" value="Genomic_DNA"/>
</dbReference>
<dbReference type="SMR" id="B3EP38"/>
<dbReference type="STRING" id="331678.Cphamn1_2273"/>
<dbReference type="KEGG" id="cpb:Cphamn1_2273"/>
<dbReference type="eggNOG" id="COG0257">
    <property type="taxonomic scope" value="Bacteria"/>
</dbReference>
<dbReference type="HOGENOM" id="CLU_135723_6_2_10"/>
<dbReference type="OrthoDB" id="9801558at2"/>
<dbReference type="GO" id="GO:0005737">
    <property type="term" value="C:cytoplasm"/>
    <property type="evidence" value="ECO:0007669"/>
    <property type="project" value="UniProtKB-ARBA"/>
</dbReference>
<dbReference type="GO" id="GO:1990904">
    <property type="term" value="C:ribonucleoprotein complex"/>
    <property type="evidence" value="ECO:0007669"/>
    <property type="project" value="UniProtKB-KW"/>
</dbReference>
<dbReference type="GO" id="GO:0005840">
    <property type="term" value="C:ribosome"/>
    <property type="evidence" value="ECO:0007669"/>
    <property type="project" value="UniProtKB-KW"/>
</dbReference>
<dbReference type="GO" id="GO:0003735">
    <property type="term" value="F:structural constituent of ribosome"/>
    <property type="evidence" value="ECO:0007669"/>
    <property type="project" value="InterPro"/>
</dbReference>
<dbReference type="GO" id="GO:0006412">
    <property type="term" value="P:translation"/>
    <property type="evidence" value="ECO:0007669"/>
    <property type="project" value="UniProtKB-UniRule"/>
</dbReference>
<dbReference type="HAMAP" id="MF_00251">
    <property type="entry name" value="Ribosomal_bL36"/>
    <property type="match status" value="1"/>
</dbReference>
<dbReference type="InterPro" id="IPR000473">
    <property type="entry name" value="Ribosomal_bL36"/>
</dbReference>
<dbReference type="InterPro" id="IPR035977">
    <property type="entry name" value="Ribosomal_bL36_sp"/>
</dbReference>
<dbReference type="NCBIfam" id="TIGR01022">
    <property type="entry name" value="rpmJ_bact"/>
    <property type="match status" value="1"/>
</dbReference>
<dbReference type="PANTHER" id="PTHR42888">
    <property type="entry name" value="50S RIBOSOMAL PROTEIN L36, CHLOROPLASTIC"/>
    <property type="match status" value="1"/>
</dbReference>
<dbReference type="PANTHER" id="PTHR42888:SF1">
    <property type="entry name" value="LARGE RIBOSOMAL SUBUNIT PROTEIN BL36C"/>
    <property type="match status" value="1"/>
</dbReference>
<dbReference type="Pfam" id="PF00444">
    <property type="entry name" value="Ribosomal_L36"/>
    <property type="match status" value="1"/>
</dbReference>
<dbReference type="SUPFAM" id="SSF57840">
    <property type="entry name" value="Ribosomal protein L36"/>
    <property type="match status" value="1"/>
</dbReference>
<dbReference type="PROSITE" id="PS00828">
    <property type="entry name" value="RIBOSOMAL_L36"/>
    <property type="match status" value="1"/>
</dbReference>